<dbReference type="EMBL" id="AB026640">
    <property type="protein sequence ID" value="BAB08940.1"/>
    <property type="molecule type" value="Genomic_DNA"/>
</dbReference>
<dbReference type="EMBL" id="CP002688">
    <property type="protein sequence ID" value="AED98290.1"/>
    <property type="molecule type" value="Genomic_DNA"/>
</dbReference>
<dbReference type="RefSeq" id="NP_201502.1">
    <property type="nucleotide sequence ID" value="NM_126101.1"/>
</dbReference>
<dbReference type="SMR" id="Q9FGC9"/>
<dbReference type="PaxDb" id="3702-AT5G67010.1"/>
<dbReference type="EnsemblPlants" id="AT5G67010.1">
    <property type="protein sequence ID" value="AT5G67010.1"/>
    <property type="gene ID" value="AT5G67010"/>
</dbReference>
<dbReference type="GeneID" id="836836"/>
<dbReference type="Gramene" id="AT5G67010.1">
    <property type="protein sequence ID" value="AT5G67010.1"/>
    <property type="gene ID" value="AT5G67010"/>
</dbReference>
<dbReference type="KEGG" id="ath:AT5G67010"/>
<dbReference type="Araport" id="AT5G67010"/>
<dbReference type="TAIR" id="AT5G67010"/>
<dbReference type="HOGENOM" id="CLU_1637728_0_0_1"/>
<dbReference type="InParanoid" id="Q9FGC9"/>
<dbReference type="OMA" id="DRIHYFN"/>
<dbReference type="PhylomeDB" id="Q9FGC9"/>
<dbReference type="PRO" id="PR:Q9FGC9"/>
<dbReference type="Proteomes" id="UP000006548">
    <property type="component" value="Chromosome 5"/>
</dbReference>
<dbReference type="ExpressionAtlas" id="Q9FGC9">
    <property type="expression patterns" value="baseline and differential"/>
</dbReference>
<dbReference type="GO" id="GO:0005634">
    <property type="term" value="C:nucleus"/>
    <property type="evidence" value="ECO:0007669"/>
    <property type="project" value="UniProtKB-SubCell"/>
</dbReference>
<dbReference type="GO" id="GO:0003677">
    <property type="term" value="F:DNA binding"/>
    <property type="evidence" value="ECO:0007669"/>
    <property type="project" value="UniProtKB-KW"/>
</dbReference>
<dbReference type="GO" id="GO:0003700">
    <property type="term" value="F:DNA-binding transcription factor activity"/>
    <property type="evidence" value="ECO:0000250"/>
    <property type="project" value="TAIR"/>
</dbReference>
<dbReference type="GO" id="GO:0009873">
    <property type="term" value="P:ethylene-activated signaling pathway"/>
    <property type="evidence" value="ECO:0007669"/>
    <property type="project" value="UniProtKB-KW"/>
</dbReference>
<dbReference type="CDD" id="cd00018">
    <property type="entry name" value="AP2"/>
    <property type="match status" value="1"/>
</dbReference>
<dbReference type="Gene3D" id="3.30.730.10">
    <property type="entry name" value="AP2/ERF domain"/>
    <property type="match status" value="1"/>
</dbReference>
<dbReference type="InterPro" id="IPR001471">
    <property type="entry name" value="AP2/ERF_dom"/>
</dbReference>
<dbReference type="InterPro" id="IPR036955">
    <property type="entry name" value="AP2/ERF_dom_sf"/>
</dbReference>
<dbReference type="InterPro" id="IPR050913">
    <property type="entry name" value="AP2/ERF_ERF_subfamily"/>
</dbReference>
<dbReference type="InterPro" id="IPR016177">
    <property type="entry name" value="DNA-bd_dom_sf"/>
</dbReference>
<dbReference type="PANTHER" id="PTHR31194:SF222">
    <property type="entry name" value="ETHYLENE-RESPONSIVE TRANSCRIPTION FACTOR ERF120-RELATED"/>
    <property type="match status" value="1"/>
</dbReference>
<dbReference type="PANTHER" id="PTHR31194">
    <property type="entry name" value="SHN SHINE , DNA BINDING / TRANSCRIPTION FACTOR"/>
    <property type="match status" value="1"/>
</dbReference>
<dbReference type="Pfam" id="PF00847">
    <property type="entry name" value="AP2"/>
    <property type="match status" value="1"/>
</dbReference>
<dbReference type="PRINTS" id="PR00367">
    <property type="entry name" value="ETHRSPELEMNT"/>
</dbReference>
<dbReference type="SMART" id="SM00380">
    <property type="entry name" value="AP2"/>
    <property type="match status" value="1"/>
</dbReference>
<dbReference type="SUPFAM" id="SSF54171">
    <property type="entry name" value="DNA-binding domain"/>
    <property type="match status" value="1"/>
</dbReference>
<dbReference type="PROSITE" id="PS51032">
    <property type="entry name" value="AP2_ERF"/>
    <property type="match status" value="1"/>
</dbReference>
<organism>
    <name type="scientific">Arabidopsis thaliana</name>
    <name type="common">Mouse-ear cress</name>
    <dbReference type="NCBI Taxonomy" id="3702"/>
    <lineage>
        <taxon>Eukaryota</taxon>
        <taxon>Viridiplantae</taxon>
        <taxon>Streptophyta</taxon>
        <taxon>Embryophyta</taxon>
        <taxon>Tracheophyta</taxon>
        <taxon>Spermatophyta</taxon>
        <taxon>Magnoliopsida</taxon>
        <taxon>eudicotyledons</taxon>
        <taxon>Gunneridae</taxon>
        <taxon>Pentapetalae</taxon>
        <taxon>rosids</taxon>
        <taxon>malvids</taxon>
        <taxon>Brassicales</taxon>
        <taxon>Brassicaceae</taxon>
        <taxon>Camelineae</taxon>
        <taxon>Arabidopsis</taxon>
    </lineage>
</organism>
<accession>Q9FGC9</accession>
<gene>
    <name type="primary">ERF121</name>
    <name type="ordered locus">At5g67010</name>
    <name type="ORF">K8A10.8</name>
</gene>
<comment type="function">
    <text evidence="1">Probably acts as a transcriptional activator. Binds to the GCC-box pathogenesis-related promoter element. May be involved in the regulation of gene expression by stress factors and by components of stress signal transduction pathways (By similarity).</text>
</comment>
<comment type="subcellular location">
    <subcellularLocation>
        <location evidence="4">Nucleus</location>
    </subcellularLocation>
</comment>
<comment type="similarity">
    <text evidence="4">Belongs to the AP2/ERF transcription factor family. ERF subfamily.</text>
</comment>
<protein>
    <recommendedName>
        <fullName>Putative ethylene-responsive transcription factor ERF121</fullName>
    </recommendedName>
</protein>
<name>EF121_ARATH</name>
<evidence type="ECO:0000250" key="1"/>
<evidence type="ECO:0000255" key="2">
    <source>
        <dbReference type="PROSITE-ProRule" id="PRU00366"/>
    </source>
</evidence>
<evidence type="ECO:0000256" key="3">
    <source>
        <dbReference type="SAM" id="MobiDB-lite"/>
    </source>
</evidence>
<evidence type="ECO:0000305" key="4"/>
<keyword id="KW-0010">Activator</keyword>
<keyword id="KW-0238">DNA-binding</keyword>
<keyword id="KW-0936">Ethylene signaling pathway</keyword>
<keyword id="KW-0539">Nucleus</keyword>
<keyword id="KW-1185">Reference proteome</keyword>
<keyword id="KW-0804">Transcription</keyword>
<keyword id="KW-0805">Transcription regulation</keyword>
<sequence length="162" mass="17605">MDYSENVQNKNFTPISQPPNLTRDQEHAIMVSTLRQVISNTGGDTSSSHYIAASEALPPSDAGPCPLCGVTSCYGCAFPQHEEIKQEKKHKGVRKKPSGKWSAEIWDPSTRTRRWLGTFPTAEMAADAYDEAAAALVEKRSARRGSKKGEGSIHQEVGGGDD</sequence>
<feature type="chain" id="PRO_0000290432" description="Putative ethylene-responsive transcription factor ERF121">
    <location>
        <begin position="1"/>
        <end position="162"/>
    </location>
</feature>
<feature type="DNA-binding region" description="AP2/ERF" evidence="2">
    <location>
        <begin position="89"/>
        <end position="146"/>
    </location>
</feature>
<feature type="region of interest" description="Disordered" evidence="3">
    <location>
        <begin position="1"/>
        <end position="21"/>
    </location>
</feature>
<feature type="region of interest" description="Disordered" evidence="3">
    <location>
        <begin position="84"/>
        <end position="103"/>
    </location>
</feature>
<feature type="region of interest" description="Disordered" evidence="3">
    <location>
        <begin position="139"/>
        <end position="162"/>
    </location>
</feature>
<feature type="compositionally biased region" description="Basic residues" evidence="3">
    <location>
        <begin position="87"/>
        <end position="98"/>
    </location>
</feature>
<reference key="1">
    <citation type="submission" date="1999-04" db="EMBL/GenBank/DDBJ databases">
        <title>Structural analysis of Arabidopsis thaliana chromosome 5. XI.</title>
        <authorList>
            <person name="Kaneko T."/>
            <person name="Katoh T."/>
            <person name="Asamizu E."/>
            <person name="Sato S."/>
            <person name="Nakamura Y."/>
            <person name="Kotani H."/>
            <person name="Tabata S."/>
        </authorList>
    </citation>
    <scope>NUCLEOTIDE SEQUENCE [LARGE SCALE GENOMIC DNA]</scope>
    <source>
        <strain>cv. Columbia</strain>
    </source>
</reference>
<reference key="2">
    <citation type="journal article" date="2017" name="Plant J.">
        <title>Araport11: a complete reannotation of the Arabidopsis thaliana reference genome.</title>
        <authorList>
            <person name="Cheng C.Y."/>
            <person name="Krishnakumar V."/>
            <person name="Chan A.P."/>
            <person name="Thibaud-Nissen F."/>
            <person name="Schobel S."/>
            <person name="Town C.D."/>
        </authorList>
    </citation>
    <scope>GENOME REANNOTATION</scope>
    <source>
        <strain>cv. Columbia</strain>
    </source>
</reference>
<reference key="3">
    <citation type="journal article" date="2006" name="Plant Physiol.">
        <title>Genome-wide analysis of the ERF gene family in Arabidopsis and rice.</title>
        <authorList>
            <person name="Nakano T."/>
            <person name="Suzuki K."/>
            <person name="Fujimura T."/>
            <person name="Shinshi H."/>
        </authorList>
    </citation>
    <scope>GENE FAMILY</scope>
    <scope>NOMENCLATURE</scope>
</reference>
<proteinExistence type="inferred from homology"/>